<sequence length="342" mass="36985">MTYSIAILGASGYTGAELIRLIAGHSALKITALGAFSKAGQSVAQVFPHLRHLDLPALLQIDQIDFANIDLCFCALPHKTSQEVIAALPSDLKVVDLSADFRLRDPDAYEKWYGNKHAALKQQAEAVYGLTEFYRDDIKTARLVAGTGCNAATGQYMLRPLITAGVIDLDDIILDLKCAVSGAGRSLKENLLHAELSEGYHAYATGSTHRHLGEFDQEFSKLAGRPVQIQFTPHLIPANRGILGTGYLRGEAAQIHDTLSQAYANEPFIDVLPFGETPSTRHVRGSNFCHIGVVADRQPGRALVVAALDNLTKGSSGQALQNANLMLNIKETEGLMMPPLFP</sequence>
<reference key="1">
    <citation type="journal article" date="2007" name="J. Bacteriol.">
        <title>The complete genome sequence of Roseobacter denitrificans reveals a mixotrophic rather than photosynthetic metabolism.</title>
        <authorList>
            <person name="Swingley W.D."/>
            <person name="Sadekar S."/>
            <person name="Mastrian S.D."/>
            <person name="Matthies H.J."/>
            <person name="Hao J."/>
            <person name="Ramos H."/>
            <person name="Acharya C.R."/>
            <person name="Conrad A.L."/>
            <person name="Taylor H.L."/>
            <person name="Dejesa L.C."/>
            <person name="Shah M.K."/>
            <person name="O'Huallachain M.E."/>
            <person name="Lince M.T."/>
            <person name="Blankenship R.E."/>
            <person name="Beatty J.T."/>
            <person name="Touchman J.W."/>
        </authorList>
    </citation>
    <scope>NUCLEOTIDE SEQUENCE [LARGE SCALE GENOMIC DNA]</scope>
    <source>
        <strain>ATCC 33942 / OCh 114</strain>
    </source>
</reference>
<proteinExistence type="inferred from homology"/>
<feature type="chain" id="PRO_1000011052" description="N-acetyl-gamma-glutamyl-phosphate reductase">
    <location>
        <begin position="1"/>
        <end position="342"/>
    </location>
</feature>
<feature type="active site" evidence="1">
    <location>
        <position position="149"/>
    </location>
</feature>
<organism>
    <name type="scientific">Roseobacter denitrificans (strain ATCC 33942 / OCh 114)</name>
    <name type="common">Erythrobacter sp. (strain OCh 114)</name>
    <name type="synonym">Roseobacter denitrificans</name>
    <dbReference type="NCBI Taxonomy" id="375451"/>
    <lineage>
        <taxon>Bacteria</taxon>
        <taxon>Pseudomonadati</taxon>
        <taxon>Pseudomonadota</taxon>
        <taxon>Alphaproteobacteria</taxon>
        <taxon>Rhodobacterales</taxon>
        <taxon>Roseobacteraceae</taxon>
        <taxon>Roseobacter</taxon>
    </lineage>
</organism>
<name>ARGC_ROSDO</name>
<gene>
    <name evidence="1" type="primary">argC</name>
    <name type="ordered locus">RD1_3227</name>
</gene>
<keyword id="KW-0028">Amino-acid biosynthesis</keyword>
<keyword id="KW-0055">Arginine biosynthesis</keyword>
<keyword id="KW-0963">Cytoplasm</keyword>
<keyword id="KW-0521">NADP</keyword>
<keyword id="KW-0560">Oxidoreductase</keyword>
<keyword id="KW-1185">Reference proteome</keyword>
<protein>
    <recommendedName>
        <fullName evidence="1">N-acetyl-gamma-glutamyl-phosphate reductase</fullName>
        <shortName evidence="1">AGPR</shortName>
        <ecNumber evidence="1">1.2.1.38</ecNumber>
    </recommendedName>
    <alternativeName>
        <fullName evidence="1">N-acetyl-glutamate semialdehyde dehydrogenase</fullName>
        <shortName evidence="1">NAGSA dehydrogenase</shortName>
    </alternativeName>
</protein>
<accession>Q163W4</accession>
<comment type="function">
    <text evidence="1">Catalyzes the NADPH-dependent reduction of N-acetyl-5-glutamyl phosphate to yield N-acetyl-L-glutamate 5-semialdehyde.</text>
</comment>
<comment type="catalytic activity">
    <reaction evidence="1">
        <text>N-acetyl-L-glutamate 5-semialdehyde + phosphate + NADP(+) = N-acetyl-L-glutamyl 5-phosphate + NADPH + H(+)</text>
        <dbReference type="Rhea" id="RHEA:21588"/>
        <dbReference type="ChEBI" id="CHEBI:15378"/>
        <dbReference type="ChEBI" id="CHEBI:29123"/>
        <dbReference type="ChEBI" id="CHEBI:43474"/>
        <dbReference type="ChEBI" id="CHEBI:57783"/>
        <dbReference type="ChEBI" id="CHEBI:57936"/>
        <dbReference type="ChEBI" id="CHEBI:58349"/>
        <dbReference type="EC" id="1.2.1.38"/>
    </reaction>
</comment>
<comment type="pathway">
    <text evidence="1">Amino-acid biosynthesis; L-arginine biosynthesis; N(2)-acetyl-L-ornithine from L-glutamate: step 3/4.</text>
</comment>
<comment type="subcellular location">
    <subcellularLocation>
        <location evidence="1">Cytoplasm</location>
    </subcellularLocation>
</comment>
<comment type="similarity">
    <text evidence="1">Belongs to the NAGSA dehydrogenase family. Type 1 subfamily.</text>
</comment>
<dbReference type="EC" id="1.2.1.38" evidence="1"/>
<dbReference type="EMBL" id="CP000362">
    <property type="protein sequence ID" value="ABG32729.1"/>
    <property type="molecule type" value="Genomic_DNA"/>
</dbReference>
<dbReference type="RefSeq" id="WP_011569345.1">
    <property type="nucleotide sequence ID" value="NC_008209.1"/>
</dbReference>
<dbReference type="SMR" id="Q163W4"/>
<dbReference type="STRING" id="375451.RD1_3227"/>
<dbReference type="KEGG" id="rde:RD1_3227"/>
<dbReference type="eggNOG" id="COG0002">
    <property type="taxonomic scope" value="Bacteria"/>
</dbReference>
<dbReference type="HOGENOM" id="CLU_006384_0_1_5"/>
<dbReference type="OrthoDB" id="9801289at2"/>
<dbReference type="UniPathway" id="UPA00068">
    <property type="reaction ID" value="UER00108"/>
</dbReference>
<dbReference type="Proteomes" id="UP000007029">
    <property type="component" value="Chromosome"/>
</dbReference>
<dbReference type="GO" id="GO:0005737">
    <property type="term" value="C:cytoplasm"/>
    <property type="evidence" value="ECO:0007669"/>
    <property type="project" value="UniProtKB-SubCell"/>
</dbReference>
<dbReference type="GO" id="GO:0003942">
    <property type="term" value="F:N-acetyl-gamma-glutamyl-phosphate reductase activity"/>
    <property type="evidence" value="ECO:0007669"/>
    <property type="project" value="UniProtKB-UniRule"/>
</dbReference>
<dbReference type="GO" id="GO:0051287">
    <property type="term" value="F:NAD binding"/>
    <property type="evidence" value="ECO:0007669"/>
    <property type="project" value="InterPro"/>
</dbReference>
<dbReference type="GO" id="GO:0070401">
    <property type="term" value="F:NADP+ binding"/>
    <property type="evidence" value="ECO:0007669"/>
    <property type="project" value="InterPro"/>
</dbReference>
<dbReference type="GO" id="GO:0006526">
    <property type="term" value="P:L-arginine biosynthetic process"/>
    <property type="evidence" value="ECO:0007669"/>
    <property type="project" value="UniProtKB-UniRule"/>
</dbReference>
<dbReference type="CDD" id="cd23934">
    <property type="entry name" value="AGPR_1_C"/>
    <property type="match status" value="1"/>
</dbReference>
<dbReference type="CDD" id="cd17895">
    <property type="entry name" value="AGPR_1_N"/>
    <property type="match status" value="1"/>
</dbReference>
<dbReference type="Gene3D" id="3.30.360.10">
    <property type="entry name" value="Dihydrodipicolinate Reductase, domain 2"/>
    <property type="match status" value="1"/>
</dbReference>
<dbReference type="Gene3D" id="3.40.50.720">
    <property type="entry name" value="NAD(P)-binding Rossmann-like Domain"/>
    <property type="match status" value="1"/>
</dbReference>
<dbReference type="HAMAP" id="MF_00150">
    <property type="entry name" value="ArgC_type1"/>
    <property type="match status" value="1"/>
</dbReference>
<dbReference type="InterPro" id="IPR000706">
    <property type="entry name" value="AGPR_type-1"/>
</dbReference>
<dbReference type="InterPro" id="IPR036291">
    <property type="entry name" value="NAD(P)-bd_dom_sf"/>
</dbReference>
<dbReference type="InterPro" id="IPR050085">
    <property type="entry name" value="NAGSA_dehydrogenase"/>
</dbReference>
<dbReference type="InterPro" id="IPR000534">
    <property type="entry name" value="Semialdehyde_DH_NAD-bd"/>
</dbReference>
<dbReference type="NCBIfam" id="TIGR01850">
    <property type="entry name" value="argC"/>
    <property type="match status" value="1"/>
</dbReference>
<dbReference type="PANTHER" id="PTHR32338:SF10">
    <property type="entry name" value="N-ACETYL-GAMMA-GLUTAMYL-PHOSPHATE REDUCTASE, CHLOROPLASTIC-RELATED"/>
    <property type="match status" value="1"/>
</dbReference>
<dbReference type="PANTHER" id="PTHR32338">
    <property type="entry name" value="N-ACETYL-GAMMA-GLUTAMYL-PHOSPHATE REDUCTASE, CHLOROPLASTIC-RELATED-RELATED"/>
    <property type="match status" value="1"/>
</dbReference>
<dbReference type="Pfam" id="PF01118">
    <property type="entry name" value="Semialdhyde_dh"/>
    <property type="match status" value="1"/>
</dbReference>
<dbReference type="Pfam" id="PF22698">
    <property type="entry name" value="Semialdhyde_dhC_1"/>
    <property type="match status" value="1"/>
</dbReference>
<dbReference type="SMART" id="SM00859">
    <property type="entry name" value="Semialdhyde_dh"/>
    <property type="match status" value="1"/>
</dbReference>
<dbReference type="SUPFAM" id="SSF55347">
    <property type="entry name" value="Glyceraldehyde-3-phosphate dehydrogenase-like, C-terminal domain"/>
    <property type="match status" value="1"/>
</dbReference>
<dbReference type="SUPFAM" id="SSF51735">
    <property type="entry name" value="NAD(P)-binding Rossmann-fold domains"/>
    <property type="match status" value="1"/>
</dbReference>
<evidence type="ECO:0000255" key="1">
    <source>
        <dbReference type="HAMAP-Rule" id="MF_00150"/>
    </source>
</evidence>